<comment type="function">
    <text evidence="1">Catalyzes the synthesis of GMP from XMP.</text>
</comment>
<comment type="catalytic activity">
    <reaction evidence="1">
        <text>XMP + L-glutamine + ATP + H2O = GMP + L-glutamate + AMP + diphosphate + 2 H(+)</text>
        <dbReference type="Rhea" id="RHEA:11680"/>
        <dbReference type="ChEBI" id="CHEBI:15377"/>
        <dbReference type="ChEBI" id="CHEBI:15378"/>
        <dbReference type="ChEBI" id="CHEBI:29985"/>
        <dbReference type="ChEBI" id="CHEBI:30616"/>
        <dbReference type="ChEBI" id="CHEBI:33019"/>
        <dbReference type="ChEBI" id="CHEBI:57464"/>
        <dbReference type="ChEBI" id="CHEBI:58115"/>
        <dbReference type="ChEBI" id="CHEBI:58359"/>
        <dbReference type="ChEBI" id="CHEBI:456215"/>
        <dbReference type="EC" id="6.3.5.2"/>
    </reaction>
</comment>
<comment type="pathway">
    <text evidence="1">Purine metabolism; GMP biosynthesis; GMP from XMP (L-Gln route): step 1/1.</text>
</comment>
<comment type="subunit">
    <text evidence="1">Homodimer.</text>
</comment>
<organism>
    <name type="scientific">Acetivibrio thermocellus (strain ATCC 27405 / DSM 1237 / JCM 9322 / NBRC 103400 / NCIMB 10682 / NRRL B-4536 / VPI 7372)</name>
    <name type="common">Clostridium thermocellum</name>
    <dbReference type="NCBI Taxonomy" id="203119"/>
    <lineage>
        <taxon>Bacteria</taxon>
        <taxon>Bacillati</taxon>
        <taxon>Bacillota</taxon>
        <taxon>Clostridia</taxon>
        <taxon>Eubacteriales</taxon>
        <taxon>Oscillospiraceae</taxon>
        <taxon>Acetivibrio</taxon>
    </lineage>
</organism>
<evidence type="ECO:0000255" key="1">
    <source>
        <dbReference type="HAMAP-Rule" id="MF_00344"/>
    </source>
</evidence>
<accession>A3DCD4</accession>
<protein>
    <recommendedName>
        <fullName evidence="1">GMP synthase [glutamine-hydrolyzing]</fullName>
        <ecNumber evidence="1">6.3.5.2</ecNumber>
    </recommendedName>
    <alternativeName>
        <fullName evidence="1">GMP synthetase</fullName>
    </alternativeName>
    <alternativeName>
        <fullName evidence="1">Glutamine amidotransferase</fullName>
    </alternativeName>
</protein>
<dbReference type="EC" id="6.3.5.2" evidence="1"/>
<dbReference type="EMBL" id="CP000568">
    <property type="protein sequence ID" value="ABN51613.1"/>
    <property type="molecule type" value="Genomic_DNA"/>
</dbReference>
<dbReference type="RefSeq" id="WP_011837818.1">
    <property type="nucleotide sequence ID" value="NC_009012.1"/>
</dbReference>
<dbReference type="SMR" id="A3DCD4"/>
<dbReference type="STRING" id="203119.Cthe_0375"/>
<dbReference type="GeneID" id="35805570"/>
<dbReference type="KEGG" id="cth:Cthe_0375"/>
<dbReference type="eggNOG" id="COG0519">
    <property type="taxonomic scope" value="Bacteria"/>
</dbReference>
<dbReference type="HOGENOM" id="CLU_014340_0_5_9"/>
<dbReference type="OrthoDB" id="9802219at2"/>
<dbReference type="UniPathway" id="UPA00189">
    <property type="reaction ID" value="UER00296"/>
</dbReference>
<dbReference type="Proteomes" id="UP000002145">
    <property type="component" value="Chromosome"/>
</dbReference>
<dbReference type="GO" id="GO:0005829">
    <property type="term" value="C:cytosol"/>
    <property type="evidence" value="ECO:0007669"/>
    <property type="project" value="TreeGrafter"/>
</dbReference>
<dbReference type="GO" id="GO:0005524">
    <property type="term" value="F:ATP binding"/>
    <property type="evidence" value="ECO:0007669"/>
    <property type="project" value="UniProtKB-UniRule"/>
</dbReference>
<dbReference type="GO" id="GO:0003921">
    <property type="term" value="F:GMP synthase activity"/>
    <property type="evidence" value="ECO:0007669"/>
    <property type="project" value="InterPro"/>
</dbReference>
<dbReference type="CDD" id="cd01742">
    <property type="entry name" value="GATase1_GMP_Synthase"/>
    <property type="match status" value="1"/>
</dbReference>
<dbReference type="CDD" id="cd01997">
    <property type="entry name" value="GMP_synthase_C"/>
    <property type="match status" value="1"/>
</dbReference>
<dbReference type="FunFam" id="3.30.300.10:FF:000002">
    <property type="entry name" value="GMP synthase [glutamine-hydrolyzing]"/>
    <property type="match status" value="1"/>
</dbReference>
<dbReference type="FunFam" id="3.40.50.620:FF:000001">
    <property type="entry name" value="GMP synthase [glutamine-hydrolyzing]"/>
    <property type="match status" value="1"/>
</dbReference>
<dbReference type="FunFam" id="3.40.50.880:FF:000001">
    <property type="entry name" value="GMP synthase [glutamine-hydrolyzing]"/>
    <property type="match status" value="1"/>
</dbReference>
<dbReference type="Gene3D" id="3.30.300.10">
    <property type="match status" value="1"/>
</dbReference>
<dbReference type="Gene3D" id="3.40.50.880">
    <property type="match status" value="1"/>
</dbReference>
<dbReference type="Gene3D" id="3.40.50.620">
    <property type="entry name" value="HUPs"/>
    <property type="match status" value="1"/>
</dbReference>
<dbReference type="HAMAP" id="MF_00344">
    <property type="entry name" value="GMP_synthase"/>
    <property type="match status" value="1"/>
</dbReference>
<dbReference type="InterPro" id="IPR029062">
    <property type="entry name" value="Class_I_gatase-like"/>
</dbReference>
<dbReference type="InterPro" id="IPR017926">
    <property type="entry name" value="GATASE"/>
</dbReference>
<dbReference type="InterPro" id="IPR001674">
    <property type="entry name" value="GMP_synth_C"/>
</dbReference>
<dbReference type="InterPro" id="IPR004739">
    <property type="entry name" value="GMP_synth_GATase"/>
</dbReference>
<dbReference type="InterPro" id="IPR022955">
    <property type="entry name" value="GMP_synthase"/>
</dbReference>
<dbReference type="InterPro" id="IPR025777">
    <property type="entry name" value="GMPS_ATP_PPase_dom"/>
</dbReference>
<dbReference type="InterPro" id="IPR022310">
    <property type="entry name" value="NAD/GMP_synthase"/>
</dbReference>
<dbReference type="InterPro" id="IPR014729">
    <property type="entry name" value="Rossmann-like_a/b/a_fold"/>
</dbReference>
<dbReference type="NCBIfam" id="TIGR00884">
    <property type="entry name" value="guaA_Cterm"/>
    <property type="match status" value="1"/>
</dbReference>
<dbReference type="NCBIfam" id="TIGR00888">
    <property type="entry name" value="guaA_Nterm"/>
    <property type="match status" value="1"/>
</dbReference>
<dbReference type="NCBIfam" id="NF000848">
    <property type="entry name" value="PRK00074.1"/>
    <property type="match status" value="1"/>
</dbReference>
<dbReference type="PANTHER" id="PTHR11922:SF2">
    <property type="entry name" value="GMP SYNTHASE [GLUTAMINE-HYDROLYZING]"/>
    <property type="match status" value="1"/>
</dbReference>
<dbReference type="PANTHER" id="PTHR11922">
    <property type="entry name" value="GMP SYNTHASE-RELATED"/>
    <property type="match status" value="1"/>
</dbReference>
<dbReference type="Pfam" id="PF00117">
    <property type="entry name" value="GATase"/>
    <property type="match status" value="1"/>
</dbReference>
<dbReference type="Pfam" id="PF00958">
    <property type="entry name" value="GMP_synt_C"/>
    <property type="match status" value="1"/>
</dbReference>
<dbReference type="Pfam" id="PF02540">
    <property type="entry name" value="NAD_synthase"/>
    <property type="match status" value="1"/>
</dbReference>
<dbReference type="PRINTS" id="PR00097">
    <property type="entry name" value="ANTSNTHASEII"/>
</dbReference>
<dbReference type="PRINTS" id="PR00099">
    <property type="entry name" value="CPSGATASE"/>
</dbReference>
<dbReference type="PRINTS" id="PR00096">
    <property type="entry name" value="GATASE"/>
</dbReference>
<dbReference type="SUPFAM" id="SSF52402">
    <property type="entry name" value="Adenine nucleotide alpha hydrolases-like"/>
    <property type="match status" value="1"/>
</dbReference>
<dbReference type="SUPFAM" id="SSF52317">
    <property type="entry name" value="Class I glutamine amidotransferase-like"/>
    <property type="match status" value="1"/>
</dbReference>
<dbReference type="PROSITE" id="PS51273">
    <property type="entry name" value="GATASE_TYPE_1"/>
    <property type="match status" value="1"/>
</dbReference>
<dbReference type="PROSITE" id="PS51553">
    <property type="entry name" value="GMPS_ATP_PPASE"/>
    <property type="match status" value="1"/>
</dbReference>
<feature type="chain" id="PRO_1000205296" description="GMP synthase [glutamine-hydrolyzing]">
    <location>
        <begin position="1"/>
        <end position="511"/>
    </location>
</feature>
<feature type="domain" description="Glutamine amidotransferase type-1" evidence="1">
    <location>
        <begin position="5"/>
        <end position="195"/>
    </location>
</feature>
<feature type="domain" description="GMPS ATP-PPase" evidence="1">
    <location>
        <begin position="196"/>
        <end position="386"/>
    </location>
</feature>
<feature type="active site" description="Nucleophile" evidence="1">
    <location>
        <position position="82"/>
    </location>
</feature>
<feature type="active site" evidence="1">
    <location>
        <position position="169"/>
    </location>
</feature>
<feature type="active site" evidence="1">
    <location>
        <position position="171"/>
    </location>
</feature>
<feature type="binding site" evidence="1">
    <location>
        <begin position="223"/>
        <end position="229"/>
    </location>
    <ligand>
        <name>ATP</name>
        <dbReference type="ChEBI" id="CHEBI:30616"/>
    </ligand>
</feature>
<sequence>MNNELILVLDFGGQYNQLIARRVREANVYCEVLPYNSSIDKIKSKNPKGIIFTGGPASVLDPKAPICDREVFELGIPILGICYGMQLMSHMLGGTVEKAEQREYGKVNITFDTSSMLFEGIEKESTCWMSHTYYVNNLPEGFVKCADTPNCPVAAIENREKKLYGVQFHPEVVHTPKGRDILNNFLYKICGCSGDWKMASFIEHSINSIREKVGDKKVLCALSGGVDSSVAAVLVHKAVGKQLTCIFVDHGLLRKYEGDQVEEVFKKQFDISLIRVNAEDRFLEKLKGVTDPERKRKIIGEEFIRVFEEEAKKIGTVDFLVQGTIYPDVIESGVGDAAVIKSHHNVGGLPDYIDFKEIIEPLRSLFKDEVRKVGIELGIPEDIVMRQPFPGPGLAVRVIGEVTKEKVDILRDADYIFREEIKNAGLDREINQYFAVLTGMRSVGVMGDERTYDYTLALRAVTTIDFMTADWAKIPYDVLEKVSNRIVNEVKHINRIVYDITTKPPATIEWE</sequence>
<name>GUAA_ACET2</name>
<gene>
    <name evidence="1" type="primary">guaA</name>
    <name type="ordered locus">Cthe_0375</name>
</gene>
<proteinExistence type="inferred from homology"/>
<keyword id="KW-0067">ATP-binding</keyword>
<keyword id="KW-0315">Glutamine amidotransferase</keyword>
<keyword id="KW-0332">GMP biosynthesis</keyword>
<keyword id="KW-0436">Ligase</keyword>
<keyword id="KW-0547">Nucleotide-binding</keyword>
<keyword id="KW-0658">Purine biosynthesis</keyword>
<keyword id="KW-1185">Reference proteome</keyword>
<reference key="1">
    <citation type="submission" date="2007-02" db="EMBL/GenBank/DDBJ databases">
        <title>Complete sequence of Clostridium thermocellum ATCC 27405.</title>
        <authorList>
            <consortium name="US DOE Joint Genome Institute"/>
            <person name="Copeland A."/>
            <person name="Lucas S."/>
            <person name="Lapidus A."/>
            <person name="Barry K."/>
            <person name="Detter J.C."/>
            <person name="Glavina del Rio T."/>
            <person name="Hammon N."/>
            <person name="Israni S."/>
            <person name="Dalin E."/>
            <person name="Tice H."/>
            <person name="Pitluck S."/>
            <person name="Chertkov O."/>
            <person name="Brettin T."/>
            <person name="Bruce D."/>
            <person name="Han C."/>
            <person name="Tapia R."/>
            <person name="Gilna P."/>
            <person name="Schmutz J."/>
            <person name="Larimer F."/>
            <person name="Land M."/>
            <person name="Hauser L."/>
            <person name="Kyrpides N."/>
            <person name="Mikhailova N."/>
            <person name="Wu J.H.D."/>
            <person name="Newcomb M."/>
            <person name="Richardson P."/>
        </authorList>
    </citation>
    <scope>NUCLEOTIDE SEQUENCE [LARGE SCALE GENOMIC DNA]</scope>
    <source>
        <strain>ATCC 27405 / DSM 1237 / JCM 9322 / NBRC 103400 / NCIMB 10682 / NRRL B-4536 / VPI 7372</strain>
    </source>
</reference>